<evidence type="ECO:0000250" key="1"/>
<evidence type="ECO:0000255" key="2"/>
<evidence type="ECO:0000255" key="3">
    <source>
        <dbReference type="PROSITE-ProRule" id="PRU00107"/>
    </source>
</evidence>
<evidence type="ECO:0000255" key="4">
    <source>
        <dbReference type="PROSITE-ProRule" id="PRU00110"/>
    </source>
</evidence>
<evidence type="ECO:0000255" key="5">
    <source>
        <dbReference type="PROSITE-ProRule" id="PRU00140"/>
    </source>
</evidence>
<evidence type="ECO:0000255" key="6">
    <source>
        <dbReference type="PROSITE-ProRule" id="PRU00141"/>
    </source>
</evidence>
<evidence type="ECO:0000255" key="7">
    <source>
        <dbReference type="PROSITE-ProRule" id="PRU00169"/>
    </source>
</evidence>
<evidence type="ECO:0000305" key="8"/>
<name>BVGS_BORPA</name>
<gene>
    <name type="primary">bvgS</name>
    <name type="ordered locus">BPP3029</name>
</gene>
<sequence length="1238" mass="134819">MPAPHRLYPRSLICLAQALLVWALLAWAPAQASQELTLVGKAAVPDVEIALDGDDWRWLARKRVLTLGVYAPDIPPFDVTYDERYEGLTADYMAIIAHNLGVQAKVLRYPTREQAVGALESGQIDLIGTVNGIEGRLQSLRLSVPYAADHPVLVMPIGARRAPPADLAGQRLAVDANYLPRETLQQAYPQATLHYFPSSEQALAAVAYGQADVFIGDALTTSHLVSQSYFNDVRVVAPAQIVTGGESFGVRADNTRLLRVVNAVLEAIPASERRSLIYRWGLGSSISLDFARPAYSAREQQWMANHPVVKVAVLNLFAPFTLFRTDEQFGGISAAVLQLLQLRTGLDFQIIGVDTVEELIAKLRSGEADMAGALFVNAARESVLSFSRPYVRNGMVIVTRQDPAAPADADHLDGRTIAMVRNSAAIPLLQQRYPQAKVVTADNPTEAMLLVADGQADAVVQTQISASYYVNRYFAGKLRIASALDLPPAEIALATARGQTELISILNKALYSISNDELASIVSRWRGSDGDPRTWYAYRNEIYLLIGLGLLSALLFLSWIVYLRRQIRQRKRAERALNDQLEFMRVLIDGTPNPIYVRDKEGRMLLCNDAYLDTFGVTADAVLGKTIPEANVVGDPALAREMHEFLLTRMAAEREPRFEDRDVTLHGRTRHVYQWTVPYGDSLGELKGIIGGWIDITERAELLRELHDAKESADAANRAKTTFLATMSHEIRTPMNAIIGMLELALLRPADQEPDRQSIQVAYDSARSLLELIGDILDIAKIEAGKFDLAPVRTALRALPEGAIRLFDGLARQKGIELVLKTDIVGVDDVLIDPLRMKQVLSNLVGNAIKFTTEGQVVLTVTARPDGEAAHVQFSVSDTGCGISEADQRQLFKPFSQVGGSAEAGPAPGTGLGLSISRRLVELMGGTLVMRSAPGVGTTVSVDLRLTMIEKSAQATPPAAAAQATPSKPQVSLRVLVVDDHKPNLMLLRQQLDYLGQRVVAADSGEAALALWHEHAFDVVITDCNMPGINGYELARRIRAAEAAPGYGRTRCILFGFTASAQMDEAQRCRAAGMDDCLFKPIGVDALRQRLNEAAARAALPTPPSPQAAAPATHDATPAAFSAESILALTQNDEALIRQLLEEVIRTNRADVDQLQKLHQQADWPKVSDMAHRLAGGARVVDAKAMIDTALALEKKAQGQAGPSPEIDGLVRTLAAQSAALETQLRAWLEQRPHQGQP</sequence>
<comment type="function">
    <text evidence="1">Member of the two-component regulatory system BvgS/BvgA. Phosphorylates BvgA via a four-step phosphorelay in response to environmental signals (By similarity).</text>
</comment>
<comment type="catalytic activity">
    <reaction>
        <text>ATP + protein L-histidine = ADP + protein N-phospho-L-histidine.</text>
        <dbReference type="EC" id="2.7.13.3"/>
    </reaction>
</comment>
<comment type="subcellular location">
    <subcellularLocation>
        <location evidence="8">Cell inner membrane</location>
        <topology evidence="8">Multi-pass membrane protein</topology>
    </subcellularLocation>
</comment>
<comment type="PTM">
    <text evidence="1">Activation requires a sequential transfer of a phosphate group from a His in the primary transmitter domain, to an Asp in the receiver domain and to a His in the secondary transmitter domain.</text>
</comment>
<feature type="signal peptide" evidence="2">
    <location>
        <begin position="1"/>
        <end position="32"/>
    </location>
</feature>
<feature type="chain" id="PRO_0000032369" description="Virulence sensor protein BvgS">
    <location>
        <begin position="33"/>
        <end position="1238"/>
    </location>
</feature>
<feature type="topological domain" description="Cytoplasmic" evidence="2">
    <location>
        <begin position="33"/>
        <end position="307"/>
    </location>
</feature>
<feature type="transmembrane region" description="Helical" evidence="2">
    <location>
        <begin position="308"/>
        <end position="331"/>
    </location>
</feature>
<feature type="topological domain" description="Periplasmic" evidence="2">
    <location>
        <begin position="332"/>
        <end position="541"/>
    </location>
</feature>
<feature type="transmembrane region" description="Helical" evidence="2">
    <location>
        <begin position="542"/>
        <end position="563"/>
    </location>
</feature>
<feature type="topological domain" description="Cytoplasmic" evidence="2">
    <location>
        <begin position="564"/>
        <end position="1238"/>
    </location>
</feature>
<feature type="domain" description="PAS" evidence="5">
    <location>
        <begin position="580"/>
        <end position="651"/>
    </location>
</feature>
<feature type="domain" description="PAC" evidence="6">
    <location>
        <begin position="652"/>
        <end position="708"/>
    </location>
</feature>
<feature type="domain" description="Histidine kinase" evidence="3">
    <location>
        <begin position="726"/>
        <end position="948"/>
    </location>
</feature>
<feature type="domain" description="Response regulatory" evidence="7">
    <location>
        <begin position="974"/>
        <end position="1095"/>
    </location>
</feature>
<feature type="domain" description="HPt" evidence="4">
    <location>
        <begin position="1133"/>
        <end position="1228"/>
    </location>
</feature>
<feature type="modified residue" description="Phosphohistidine; by autocatalysis" evidence="3">
    <location>
        <position position="729"/>
    </location>
</feature>
<feature type="modified residue" description="4-aspartylphosphate" evidence="7">
    <location>
        <position position="1023"/>
    </location>
</feature>
<feature type="modified residue" description="Phosphohistidine" evidence="4">
    <location>
        <position position="1172"/>
    </location>
</feature>
<feature type="sequence conflict" description="In Ref. 1; CAA37124." evidence="8" ref="1">
    <original>QR</original>
    <variation>HA</variation>
    <location>
        <begin position="1067"/>
        <end position="1068"/>
    </location>
</feature>
<proteinExistence type="inferred from homology"/>
<keyword id="KW-0067">ATP-binding</keyword>
<keyword id="KW-0997">Cell inner membrane</keyword>
<keyword id="KW-1003">Cell membrane</keyword>
<keyword id="KW-0418">Kinase</keyword>
<keyword id="KW-0472">Membrane</keyword>
<keyword id="KW-0547">Nucleotide-binding</keyword>
<keyword id="KW-0597">Phosphoprotein</keyword>
<keyword id="KW-0732">Signal</keyword>
<keyword id="KW-0808">Transferase</keyword>
<keyword id="KW-0812">Transmembrane</keyword>
<keyword id="KW-1133">Transmembrane helix</keyword>
<keyword id="KW-0902">Two-component regulatory system</keyword>
<keyword id="KW-0843">Virulence</keyword>
<reference key="1">
    <citation type="journal article" date="1991" name="Mol. Microbiol.">
        <title>Structural and genetic analysis of the bvg locus in Bordetella species.</title>
        <authorList>
            <person name="Arico B."/>
            <person name="Scarlato V."/>
            <person name="Monack D.M."/>
            <person name="Falkow S."/>
            <person name="Rappuoli R."/>
        </authorList>
    </citation>
    <scope>NUCLEOTIDE SEQUENCE [GENOMIC DNA]</scope>
    <source>
        <strain>ATCC 9305</strain>
    </source>
</reference>
<reference key="2">
    <citation type="journal article" date="2003" name="Nat. Genet.">
        <title>Comparative analysis of the genome sequences of Bordetella pertussis, Bordetella parapertussis and Bordetella bronchiseptica.</title>
        <authorList>
            <person name="Parkhill J."/>
            <person name="Sebaihia M."/>
            <person name="Preston A."/>
            <person name="Murphy L.D."/>
            <person name="Thomson N.R."/>
            <person name="Harris D.E."/>
            <person name="Holden M.T.G."/>
            <person name="Churcher C.M."/>
            <person name="Bentley S.D."/>
            <person name="Mungall K.L."/>
            <person name="Cerdeno-Tarraga A.-M."/>
            <person name="Temple L."/>
            <person name="James K.D."/>
            <person name="Harris B."/>
            <person name="Quail M.A."/>
            <person name="Achtman M."/>
            <person name="Atkin R."/>
            <person name="Baker S."/>
            <person name="Basham D."/>
            <person name="Bason N."/>
            <person name="Cherevach I."/>
            <person name="Chillingworth T."/>
            <person name="Collins M."/>
            <person name="Cronin A."/>
            <person name="Davis P."/>
            <person name="Doggett J."/>
            <person name="Feltwell T."/>
            <person name="Goble A."/>
            <person name="Hamlin N."/>
            <person name="Hauser H."/>
            <person name="Holroyd S."/>
            <person name="Jagels K."/>
            <person name="Leather S."/>
            <person name="Moule S."/>
            <person name="Norberczak H."/>
            <person name="O'Neil S."/>
            <person name="Ormond D."/>
            <person name="Price C."/>
            <person name="Rabbinowitsch E."/>
            <person name="Rutter S."/>
            <person name="Sanders M."/>
            <person name="Saunders D."/>
            <person name="Seeger K."/>
            <person name="Sharp S."/>
            <person name="Simmonds M."/>
            <person name="Skelton J."/>
            <person name="Squares R."/>
            <person name="Squares S."/>
            <person name="Stevens K."/>
            <person name="Unwin L."/>
            <person name="Whitehead S."/>
            <person name="Barrell B.G."/>
            <person name="Maskell D.J."/>
        </authorList>
    </citation>
    <scope>NUCLEOTIDE SEQUENCE [LARGE SCALE GENOMIC DNA]</scope>
    <source>
        <strain>12822 / ATCC BAA-587 / NCTC 13253</strain>
    </source>
</reference>
<protein>
    <recommendedName>
        <fullName>Virulence sensor protein BvgS</fullName>
        <ecNumber>2.7.13.3</ecNumber>
    </recommendedName>
</protein>
<accession>P40330</accession>
<organism>
    <name type="scientific">Bordetella parapertussis (strain 12822 / ATCC BAA-587 / NCTC 13253)</name>
    <dbReference type="NCBI Taxonomy" id="257311"/>
    <lineage>
        <taxon>Bacteria</taxon>
        <taxon>Pseudomonadati</taxon>
        <taxon>Pseudomonadota</taxon>
        <taxon>Betaproteobacteria</taxon>
        <taxon>Burkholderiales</taxon>
        <taxon>Alcaligenaceae</taxon>
        <taxon>Bordetella</taxon>
    </lineage>
</organism>
<dbReference type="EC" id="2.7.13.3"/>
<dbReference type="EMBL" id="X52948">
    <property type="protein sequence ID" value="CAA37124.1"/>
    <property type="molecule type" value="Genomic_DNA"/>
</dbReference>
<dbReference type="EMBL" id="BX640432">
    <property type="protein sequence ID" value="CAE38319.1"/>
    <property type="molecule type" value="Genomic_DNA"/>
</dbReference>
<dbReference type="PIR" id="S17946">
    <property type="entry name" value="S17946"/>
</dbReference>
<dbReference type="RefSeq" id="WP_010928858.1">
    <property type="nucleotide sequence ID" value="NC_002928.3"/>
</dbReference>
<dbReference type="SMR" id="P40330"/>
<dbReference type="GeneID" id="93204814"/>
<dbReference type="KEGG" id="bpa:BPP3029"/>
<dbReference type="HOGENOM" id="CLU_000445_37_3_4"/>
<dbReference type="BRENDA" id="2.7.13.3">
    <property type="organism ID" value="898"/>
</dbReference>
<dbReference type="Proteomes" id="UP000001421">
    <property type="component" value="Chromosome"/>
</dbReference>
<dbReference type="GO" id="GO:0005886">
    <property type="term" value="C:plasma membrane"/>
    <property type="evidence" value="ECO:0007669"/>
    <property type="project" value="UniProtKB-SubCell"/>
</dbReference>
<dbReference type="GO" id="GO:0005524">
    <property type="term" value="F:ATP binding"/>
    <property type="evidence" value="ECO:0007669"/>
    <property type="project" value="UniProtKB-KW"/>
</dbReference>
<dbReference type="GO" id="GO:0009927">
    <property type="term" value="F:histidine phosphotransfer kinase activity"/>
    <property type="evidence" value="ECO:0007669"/>
    <property type="project" value="TreeGrafter"/>
</dbReference>
<dbReference type="GO" id="GO:0000155">
    <property type="term" value="F:phosphorelay sensor kinase activity"/>
    <property type="evidence" value="ECO:0007669"/>
    <property type="project" value="InterPro"/>
</dbReference>
<dbReference type="GO" id="GO:0006355">
    <property type="term" value="P:regulation of DNA-templated transcription"/>
    <property type="evidence" value="ECO:0007669"/>
    <property type="project" value="InterPro"/>
</dbReference>
<dbReference type="CDD" id="cd16922">
    <property type="entry name" value="HATPase_EvgS-ArcB-TorS-like"/>
    <property type="match status" value="1"/>
</dbReference>
<dbReference type="CDD" id="cd00082">
    <property type="entry name" value="HisKA"/>
    <property type="match status" value="1"/>
</dbReference>
<dbReference type="CDD" id="cd00088">
    <property type="entry name" value="HPT"/>
    <property type="match status" value="1"/>
</dbReference>
<dbReference type="CDD" id="cd00130">
    <property type="entry name" value="PAS"/>
    <property type="match status" value="1"/>
</dbReference>
<dbReference type="CDD" id="cd13705">
    <property type="entry name" value="PBP2_BvgS_D1"/>
    <property type="match status" value="1"/>
</dbReference>
<dbReference type="CDD" id="cd13707">
    <property type="entry name" value="PBP2_BvgS_D2"/>
    <property type="match status" value="1"/>
</dbReference>
<dbReference type="CDD" id="cd17546">
    <property type="entry name" value="REC_hyHK_CKI1_RcsC-like"/>
    <property type="match status" value="1"/>
</dbReference>
<dbReference type="FunFam" id="3.30.565.10:FF:000010">
    <property type="entry name" value="Sensor histidine kinase RcsC"/>
    <property type="match status" value="1"/>
</dbReference>
<dbReference type="Gene3D" id="1.10.287.130">
    <property type="match status" value="1"/>
</dbReference>
<dbReference type="Gene3D" id="3.40.50.2300">
    <property type="match status" value="1"/>
</dbReference>
<dbReference type="Gene3D" id="3.30.565.10">
    <property type="entry name" value="Histidine kinase-like ATPase, C-terminal domain"/>
    <property type="match status" value="1"/>
</dbReference>
<dbReference type="Gene3D" id="1.20.120.160">
    <property type="entry name" value="HPT domain"/>
    <property type="match status" value="1"/>
</dbReference>
<dbReference type="Gene3D" id="3.30.450.20">
    <property type="entry name" value="PAS domain"/>
    <property type="match status" value="1"/>
</dbReference>
<dbReference type="Gene3D" id="3.40.190.10">
    <property type="entry name" value="Periplasmic binding protein-like II"/>
    <property type="match status" value="4"/>
</dbReference>
<dbReference type="InterPro" id="IPR049870">
    <property type="entry name" value="BvgS-like_periplasmic1"/>
</dbReference>
<dbReference type="InterPro" id="IPR049871">
    <property type="entry name" value="BvgS-like_periplasmic2"/>
</dbReference>
<dbReference type="InterPro" id="IPR011006">
    <property type="entry name" value="CheY-like_superfamily"/>
</dbReference>
<dbReference type="InterPro" id="IPR036890">
    <property type="entry name" value="HATPase_C_sf"/>
</dbReference>
<dbReference type="InterPro" id="IPR005467">
    <property type="entry name" value="His_kinase_dom"/>
</dbReference>
<dbReference type="InterPro" id="IPR003661">
    <property type="entry name" value="HisK_dim/P_dom"/>
</dbReference>
<dbReference type="InterPro" id="IPR036097">
    <property type="entry name" value="HisK_dim/P_sf"/>
</dbReference>
<dbReference type="InterPro" id="IPR036641">
    <property type="entry name" value="HPT_dom_sf"/>
</dbReference>
<dbReference type="InterPro" id="IPR000014">
    <property type="entry name" value="PAS"/>
</dbReference>
<dbReference type="InterPro" id="IPR000700">
    <property type="entry name" value="PAS-assoc_C"/>
</dbReference>
<dbReference type="InterPro" id="IPR035965">
    <property type="entry name" value="PAS-like_dom_sf"/>
</dbReference>
<dbReference type="InterPro" id="IPR013767">
    <property type="entry name" value="PAS_fold"/>
</dbReference>
<dbReference type="InterPro" id="IPR004358">
    <property type="entry name" value="Sig_transdc_His_kin-like_C"/>
</dbReference>
<dbReference type="InterPro" id="IPR008207">
    <property type="entry name" value="Sig_transdc_His_kin_Hpt_dom"/>
</dbReference>
<dbReference type="InterPro" id="IPR001789">
    <property type="entry name" value="Sig_transdc_resp-reg_receiver"/>
</dbReference>
<dbReference type="InterPro" id="IPR001638">
    <property type="entry name" value="Solute-binding_3/MltF_N"/>
</dbReference>
<dbReference type="NCBIfam" id="TIGR00229">
    <property type="entry name" value="sensory_box"/>
    <property type="match status" value="1"/>
</dbReference>
<dbReference type="PANTHER" id="PTHR43047:SF72">
    <property type="entry name" value="OSMOSENSING HISTIDINE PROTEIN KINASE SLN1"/>
    <property type="match status" value="1"/>
</dbReference>
<dbReference type="PANTHER" id="PTHR43047">
    <property type="entry name" value="TWO-COMPONENT HISTIDINE PROTEIN KINASE"/>
    <property type="match status" value="1"/>
</dbReference>
<dbReference type="Pfam" id="PF02518">
    <property type="entry name" value="HATPase_c"/>
    <property type="match status" value="1"/>
</dbReference>
<dbReference type="Pfam" id="PF00512">
    <property type="entry name" value="HisKA"/>
    <property type="match status" value="1"/>
</dbReference>
<dbReference type="Pfam" id="PF01627">
    <property type="entry name" value="Hpt"/>
    <property type="match status" value="1"/>
</dbReference>
<dbReference type="Pfam" id="PF00989">
    <property type="entry name" value="PAS"/>
    <property type="match status" value="1"/>
</dbReference>
<dbReference type="Pfam" id="PF00072">
    <property type="entry name" value="Response_reg"/>
    <property type="match status" value="1"/>
</dbReference>
<dbReference type="Pfam" id="PF00497">
    <property type="entry name" value="SBP_bac_3"/>
    <property type="match status" value="2"/>
</dbReference>
<dbReference type="PRINTS" id="PR00344">
    <property type="entry name" value="BCTRLSENSOR"/>
</dbReference>
<dbReference type="SMART" id="SM00387">
    <property type="entry name" value="HATPase_c"/>
    <property type="match status" value="1"/>
</dbReference>
<dbReference type="SMART" id="SM00388">
    <property type="entry name" value="HisKA"/>
    <property type="match status" value="1"/>
</dbReference>
<dbReference type="SMART" id="SM00073">
    <property type="entry name" value="HPT"/>
    <property type="match status" value="1"/>
</dbReference>
<dbReference type="SMART" id="SM00091">
    <property type="entry name" value="PAS"/>
    <property type="match status" value="1"/>
</dbReference>
<dbReference type="SMART" id="SM00062">
    <property type="entry name" value="PBPb"/>
    <property type="match status" value="2"/>
</dbReference>
<dbReference type="SMART" id="SM00448">
    <property type="entry name" value="REC"/>
    <property type="match status" value="1"/>
</dbReference>
<dbReference type="SUPFAM" id="SSF55874">
    <property type="entry name" value="ATPase domain of HSP90 chaperone/DNA topoisomerase II/histidine kinase"/>
    <property type="match status" value="1"/>
</dbReference>
<dbReference type="SUPFAM" id="SSF52172">
    <property type="entry name" value="CheY-like"/>
    <property type="match status" value="1"/>
</dbReference>
<dbReference type="SUPFAM" id="SSF47226">
    <property type="entry name" value="Histidine-containing phosphotransfer domain, HPT domain"/>
    <property type="match status" value="1"/>
</dbReference>
<dbReference type="SUPFAM" id="SSF47384">
    <property type="entry name" value="Homodimeric domain of signal transducing histidine kinase"/>
    <property type="match status" value="1"/>
</dbReference>
<dbReference type="SUPFAM" id="SSF53850">
    <property type="entry name" value="Periplasmic binding protein-like II"/>
    <property type="match status" value="2"/>
</dbReference>
<dbReference type="SUPFAM" id="SSF55785">
    <property type="entry name" value="PYP-like sensor domain (PAS domain)"/>
    <property type="match status" value="1"/>
</dbReference>
<dbReference type="PROSITE" id="PS50109">
    <property type="entry name" value="HIS_KIN"/>
    <property type="match status" value="1"/>
</dbReference>
<dbReference type="PROSITE" id="PS50894">
    <property type="entry name" value="HPT"/>
    <property type="match status" value="1"/>
</dbReference>
<dbReference type="PROSITE" id="PS50113">
    <property type="entry name" value="PAC"/>
    <property type="match status" value="1"/>
</dbReference>
<dbReference type="PROSITE" id="PS50112">
    <property type="entry name" value="PAS"/>
    <property type="match status" value="1"/>
</dbReference>
<dbReference type="PROSITE" id="PS50110">
    <property type="entry name" value="RESPONSE_REGULATORY"/>
    <property type="match status" value="1"/>
</dbReference>